<dbReference type="EC" id="3.6.5.n1" evidence="1"/>
<dbReference type="EMBL" id="BX293980">
    <property type="protein sequence ID" value="CAE76970.1"/>
    <property type="molecule type" value="Genomic_DNA"/>
</dbReference>
<dbReference type="RefSeq" id="NP_975328.2">
    <property type="nucleotide sequence ID" value="NC_005364.2"/>
</dbReference>
<dbReference type="RefSeq" id="WP_011166526.1">
    <property type="nucleotide sequence ID" value="NC_005364.2"/>
</dbReference>
<dbReference type="SMR" id="Q6MTR6"/>
<dbReference type="STRING" id="272632.MSC_0330"/>
<dbReference type="KEGG" id="mmy:MSC_0330"/>
<dbReference type="PATRIC" id="fig|272632.4.peg.356"/>
<dbReference type="eggNOG" id="COG0481">
    <property type="taxonomic scope" value="Bacteria"/>
</dbReference>
<dbReference type="Proteomes" id="UP000001016">
    <property type="component" value="Chromosome"/>
</dbReference>
<dbReference type="GO" id="GO:0005886">
    <property type="term" value="C:plasma membrane"/>
    <property type="evidence" value="ECO:0007669"/>
    <property type="project" value="UniProtKB-SubCell"/>
</dbReference>
<dbReference type="GO" id="GO:0005525">
    <property type="term" value="F:GTP binding"/>
    <property type="evidence" value="ECO:0007669"/>
    <property type="project" value="UniProtKB-UniRule"/>
</dbReference>
<dbReference type="GO" id="GO:0003924">
    <property type="term" value="F:GTPase activity"/>
    <property type="evidence" value="ECO:0007669"/>
    <property type="project" value="UniProtKB-UniRule"/>
</dbReference>
<dbReference type="GO" id="GO:0043022">
    <property type="term" value="F:ribosome binding"/>
    <property type="evidence" value="ECO:0007669"/>
    <property type="project" value="UniProtKB-UniRule"/>
</dbReference>
<dbReference type="GO" id="GO:0003746">
    <property type="term" value="F:translation elongation factor activity"/>
    <property type="evidence" value="ECO:0007669"/>
    <property type="project" value="UniProtKB-UniRule"/>
</dbReference>
<dbReference type="GO" id="GO:0045727">
    <property type="term" value="P:positive regulation of translation"/>
    <property type="evidence" value="ECO:0007669"/>
    <property type="project" value="UniProtKB-UniRule"/>
</dbReference>
<dbReference type="CDD" id="cd03699">
    <property type="entry name" value="EF4_II"/>
    <property type="match status" value="1"/>
</dbReference>
<dbReference type="CDD" id="cd16260">
    <property type="entry name" value="EF4_III"/>
    <property type="match status" value="1"/>
</dbReference>
<dbReference type="CDD" id="cd01890">
    <property type="entry name" value="LepA"/>
    <property type="match status" value="1"/>
</dbReference>
<dbReference type="CDD" id="cd03709">
    <property type="entry name" value="lepA_C"/>
    <property type="match status" value="1"/>
</dbReference>
<dbReference type="FunFam" id="3.40.50.300:FF:000078">
    <property type="entry name" value="Elongation factor 4"/>
    <property type="match status" value="1"/>
</dbReference>
<dbReference type="FunFam" id="2.40.30.10:FF:000015">
    <property type="entry name" value="Translation factor GUF1, mitochondrial"/>
    <property type="match status" value="1"/>
</dbReference>
<dbReference type="FunFam" id="3.30.70.240:FF:000007">
    <property type="entry name" value="Translation factor GUF1, mitochondrial"/>
    <property type="match status" value="1"/>
</dbReference>
<dbReference type="FunFam" id="3.30.70.2570:FF:000001">
    <property type="entry name" value="Translation factor GUF1, mitochondrial"/>
    <property type="match status" value="1"/>
</dbReference>
<dbReference type="FunFam" id="3.30.70.870:FF:000004">
    <property type="entry name" value="Translation factor GUF1, mitochondrial"/>
    <property type="match status" value="1"/>
</dbReference>
<dbReference type="Gene3D" id="3.30.70.240">
    <property type="match status" value="1"/>
</dbReference>
<dbReference type="Gene3D" id="3.30.70.2570">
    <property type="entry name" value="Elongation factor 4, C-terminal domain"/>
    <property type="match status" value="1"/>
</dbReference>
<dbReference type="Gene3D" id="3.30.70.870">
    <property type="entry name" value="Elongation Factor G (Translational Gtpase), domain 3"/>
    <property type="match status" value="1"/>
</dbReference>
<dbReference type="Gene3D" id="3.40.50.300">
    <property type="entry name" value="P-loop containing nucleotide triphosphate hydrolases"/>
    <property type="match status" value="1"/>
</dbReference>
<dbReference type="Gene3D" id="2.40.30.10">
    <property type="entry name" value="Translation factors"/>
    <property type="match status" value="1"/>
</dbReference>
<dbReference type="HAMAP" id="MF_00071">
    <property type="entry name" value="LepA"/>
    <property type="match status" value="1"/>
</dbReference>
<dbReference type="InterPro" id="IPR006297">
    <property type="entry name" value="EF-4"/>
</dbReference>
<dbReference type="InterPro" id="IPR035647">
    <property type="entry name" value="EFG_III/V"/>
</dbReference>
<dbReference type="InterPro" id="IPR000640">
    <property type="entry name" value="EFG_V-like"/>
</dbReference>
<dbReference type="InterPro" id="IPR004161">
    <property type="entry name" value="EFTu-like_2"/>
</dbReference>
<dbReference type="InterPro" id="IPR031157">
    <property type="entry name" value="G_TR_CS"/>
</dbReference>
<dbReference type="InterPro" id="IPR038363">
    <property type="entry name" value="LepA_C_sf"/>
</dbReference>
<dbReference type="InterPro" id="IPR013842">
    <property type="entry name" value="LepA_CTD"/>
</dbReference>
<dbReference type="InterPro" id="IPR035654">
    <property type="entry name" value="LepA_IV"/>
</dbReference>
<dbReference type="InterPro" id="IPR027417">
    <property type="entry name" value="P-loop_NTPase"/>
</dbReference>
<dbReference type="InterPro" id="IPR005225">
    <property type="entry name" value="Small_GTP-bd"/>
</dbReference>
<dbReference type="InterPro" id="IPR000795">
    <property type="entry name" value="T_Tr_GTP-bd_dom"/>
</dbReference>
<dbReference type="InterPro" id="IPR009000">
    <property type="entry name" value="Transl_B-barrel_sf"/>
</dbReference>
<dbReference type="NCBIfam" id="TIGR01393">
    <property type="entry name" value="lepA"/>
    <property type="match status" value="1"/>
</dbReference>
<dbReference type="NCBIfam" id="TIGR00231">
    <property type="entry name" value="small_GTP"/>
    <property type="match status" value="1"/>
</dbReference>
<dbReference type="PANTHER" id="PTHR43512:SF4">
    <property type="entry name" value="TRANSLATION FACTOR GUF1 HOMOLOG, CHLOROPLASTIC"/>
    <property type="match status" value="1"/>
</dbReference>
<dbReference type="PANTHER" id="PTHR43512">
    <property type="entry name" value="TRANSLATION FACTOR GUF1-RELATED"/>
    <property type="match status" value="1"/>
</dbReference>
<dbReference type="Pfam" id="PF00679">
    <property type="entry name" value="EFG_C"/>
    <property type="match status" value="1"/>
</dbReference>
<dbReference type="Pfam" id="PF00009">
    <property type="entry name" value="GTP_EFTU"/>
    <property type="match status" value="1"/>
</dbReference>
<dbReference type="Pfam" id="PF03144">
    <property type="entry name" value="GTP_EFTU_D2"/>
    <property type="match status" value="1"/>
</dbReference>
<dbReference type="Pfam" id="PF06421">
    <property type="entry name" value="LepA_C"/>
    <property type="match status" value="1"/>
</dbReference>
<dbReference type="PRINTS" id="PR00315">
    <property type="entry name" value="ELONGATNFCT"/>
</dbReference>
<dbReference type="SMART" id="SM00838">
    <property type="entry name" value="EFG_C"/>
    <property type="match status" value="1"/>
</dbReference>
<dbReference type="SUPFAM" id="SSF54980">
    <property type="entry name" value="EF-G C-terminal domain-like"/>
    <property type="match status" value="2"/>
</dbReference>
<dbReference type="SUPFAM" id="SSF52540">
    <property type="entry name" value="P-loop containing nucleoside triphosphate hydrolases"/>
    <property type="match status" value="1"/>
</dbReference>
<dbReference type="SUPFAM" id="SSF50447">
    <property type="entry name" value="Translation proteins"/>
    <property type="match status" value="1"/>
</dbReference>
<dbReference type="PROSITE" id="PS00301">
    <property type="entry name" value="G_TR_1"/>
    <property type="match status" value="1"/>
</dbReference>
<dbReference type="PROSITE" id="PS51722">
    <property type="entry name" value="G_TR_2"/>
    <property type="match status" value="1"/>
</dbReference>
<sequence>MDKSKIRNFSIIAHIDHGKSTLADRILELTNTVEKREMQDQLLDSMDIERERGITIKLNSVQLKYHSKDNQDYIFNLIDTPGHVDFTYEVSRSLAACEGAILVVDASQGVEAQTLANVYLAIDSNLEIIPVINKIDLPSADVDKVKHEIEEIIGLDCSKSPLISAKTGLNVEDVLQAIVEKIPSPSDAIDNAPLKALIFDSYYDKYLGVVMSIRLKQGMLKVGDKIKLMSTNAEYEVTSLGIKTPKIVKKDFLEAGEVGWVAASIKTIKDVNVGDTITSVLNPADEPLDGYKKLKPMVYCGIYPIDTNKYQDFKEALEKIELSDSSLVYEPETSQALGFGFRCGFLGLLHMEVIQERLEREYNLELIATAPSVVYKVHLTNKQVIELDNPALLPEAQKISKIEEPFVEIKIATPSEYIGDLMNLCQNKLGIYKNMEVIDNNRRILIYQMPLAEIIFDFFNKLKSISKGYASFEYELIGYKESKLVRMDIKLNGEMVDAFSMIVNQKFAYQRGSALTLKLKELIPRQNFEVPVQATIGNKVISRETIKAYRKDVTWKLHAADKSRRKKLLEKQKEGKIKMKEIGTVEVPQEAFVAILKIDD</sequence>
<feature type="chain" id="PRO_0000176302" description="Elongation factor 4">
    <location>
        <begin position="1"/>
        <end position="600"/>
    </location>
</feature>
<feature type="domain" description="tr-type G">
    <location>
        <begin position="4"/>
        <end position="186"/>
    </location>
</feature>
<feature type="binding site" evidence="1">
    <location>
        <begin position="16"/>
        <end position="21"/>
    </location>
    <ligand>
        <name>GTP</name>
        <dbReference type="ChEBI" id="CHEBI:37565"/>
    </ligand>
</feature>
<feature type="binding site" evidence="1">
    <location>
        <begin position="133"/>
        <end position="136"/>
    </location>
    <ligand>
        <name>GTP</name>
        <dbReference type="ChEBI" id="CHEBI:37565"/>
    </ligand>
</feature>
<proteinExistence type="inferred from homology"/>
<name>LEPA_MYCMS</name>
<organism>
    <name type="scientific">Mycoplasma mycoides subsp. mycoides SC (strain CCUG 32753 / NCTC 10114 / PG1)</name>
    <dbReference type="NCBI Taxonomy" id="272632"/>
    <lineage>
        <taxon>Bacteria</taxon>
        <taxon>Bacillati</taxon>
        <taxon>Mycoplasmatota</taxon>
        <taxon>Mollicutes</taxon>
        <taxon>Mycoplasmataceae</taxon>
        <taxon>Mycoplasma</taxon>
    </lineage>
</organism>
<keyword id="KW-1003">Cell membrane</keyword>
<keyword id="KW-0342">GTP-binding</keyword>
<keyword id="KW-0378">Hydrolase</keyword>
<keyword id="KW-0472">Membrane</keyword>
<keyword id="KW-0547">Nucleotide-binding</keyword>
<keyword id="KW-0648">Protein biosynthesis</keyword>
<keyword id="KW-1185">Reference proteome</keyword>
<evidence type="ECO:0000255" key="1">
    <source>
        <dbReference type="HAMAP-Rule" id="MF_00071"/>
    </source>
</evidence>
<comment type="function">
    <text evidence="1">Required for accurate and efficient protein synthesis under certain stress conditions. May act as a fidelity factor of the translation reaction, by catalyzing a one-codon backward translocation of tRNAs on improperly translocated ribosomes. Back-translocation proceeds from a post-translocation (POST) complex to a pre-translocation (PRE) complex, thus giving elongation factor G a second chance to translocate the tRNAs correctly. Binds to ribosomes in a GTP-dependent manner.</text>
</comment>
<comment type="catalytic activity">
    <reaction evidence="1">
        <text>GTP + H2O = GDP + phosphate + H(+)</text>
        <dbReference type="Rhea" id="RHEA:19669"/>
        <dbReference type="ChEBI" id="CHEBI:15377"/>
        <dbReference type="ChEBI" id="CHEBI:15378"/>
        <dbReference type="ChEBI" id="CHEBI:37565"/>
        <dbReference type="ChEBI" id="CHEBI:43474"/>
        <dbReference type="ChEBI" id="CHEBI:58189"/>
        <dbReference type="EC" id="3.6.5.n1"/>
    </reaction>
</comment>
<comment type="subcellular location">
    <subcellularLocation>
        <location evidence="1">Cell membrane</location>
        <topology evidence="1">Peripheral membrane protein</topology>
        <orientation evidence="1">Cytoplasmic side</orientation>
    </subcellularLocation>
</comment>
<comment type="similarity">
    <text evidence="1">Belongs to the TRAFAC class translation factor GTPase superfamily. Classic translation factor GTPase family. LepA subfamily.</text>
</comment>
<accession>Q6MTR6</accession>
<reference key="1">
    <citation type="journal article" date="2004" name="Genome Res.">
        <title>The genome sequence of Mycoplasma mycoides subsp. mycoides SC type strain PG1T, the causative agent of contagious bovine pleuropneumonia (CBPP).</title>
        <authorList>
            <person name="Westberg J."/>
            <person name="Persson A."/>
            <person name="Holmberg A."/>
            <person name="Goesmann A."/>
            <person name="Lundeberg J."/>
            <person name="Johansson K.-E."/>
            <person name="Pettersson B."/>
            <person name="Uhlen M."/>
        </authorList>
    </citation>
    <scope>NUCLEOTIDE SEQUENCE [LARGE SCALE GENOMIC DNA]</scope>
    <source>
        <strain>CCUG 32753 / NCTC 10114 / PG1</strain>
    </source>
</reference>
<protein>
    <recommendedName>
        <fullName evidence="1">Elongation factor 4</fullName>
        <shortName evidence="1">EF-4</shortName>
        <ecNumber evidence="1">3.6.5.n1</ecNumber>
    </recommendedName>
    <alternativeName>
        <fullName evidence="1">Ribosomal back-translocase LepA</fullName>
    </alternativeName>
</protein>
<gene>
    <name evidence="1" type="primary">lepA</name>
    <name type="ordered locus">MSC_0330</name>
</gene>